<gene>
    <name type="primary">hisJ</name>
    <name type="ordered locus">c2851</name>
</gene>
<feature type="signal peptide" evidence="2">
    <location>
        <begin position="1"/>
        <end position="22"/>
    </location>
</feature>
<feature type="chain" id="PRO_0000045057" description="Histidine-binding periplasmic protein">
    <location>
        <begin position="23"/>
        <end position="260"/>
    </location>
</feature>
<feature type="binding site" evidence="2">
    <location>
        <position position="91"/>
    </location>
    <ligand>
        <name>L-histidine</name>
        <dbReference type="ChEBI" id="CHEBI:57595"/>
    </ligand>
</feature>
<feature type="binding site" evidence="2">
    <location>
        <position position="92"/>
    </location>
    <ligand>
        <name>L-histidine</name>
        <dbReference type="ChEBI" id="CHEBI:57595"/>
    </ligand>
</feature>
<feature type="binding site" evidence="2">
    <location>
        <position position="94"/>
    </location>
    <ligand>
        <name>L-histidine</name>
        <dbReference type="ChEBI" id="CHEBI:57595"/>
    </ligand>
</feature>
<feature type="binding site" evidence="2">
    <location>
        <position position="99"/>
    </location>
    <ligand>
        <name>L-histidine</name>
        <dbReference type="ChEBI" id="CHEBI:57595"/>
    </ligand>
</feature>
<feature type="binding site" evidence="2">
    <location>
        <position position="143"/>
    </location>
    <ligand>
        <name>L-histidine</name>
        <dbReference type="ChEBI" id="CHEBI:57595"/>
    </ligand>
</feature>
<feature type="binding site" evidence="2">
    <location>
        <position position="183"/>
    </location>
    <ligand>
        <name>L-histidine</name>
        <dbReference type="ChEBI" id="CHEBI:57595"/>
    </ligand>
</feature>
<feature type="disulfide bond" evidence="2">
    <location>
        <begin position="60"/>
        <end position="67"/>
    </location>
</feature>
<name>HISJ_ECOL6</name>
<organism>
    <name type="scientific">Escherichia coli O6:H1 (strain CFT073 / ATCC 700928 / UPEC)</name>
    <dbReference type="NCBI Taxonomy" id="199310"/>
    <lineage>
        <taxon>Bacteria</taxon>
        <taxon>Pseudomonadati</taxon>
        <taxon>Pseudomonadota</taxon>
        <taxon>Gammaproteobacteria</taxon>
        <taxon>Enterobacterales</taxon>
        <taxon>Enterobacteriaceae</taxon>
        <taxon>Escherichia</taxon>
    </lineage>
</organism>
<reference key="1">
    <citation type="journal article" date="2002" name="Proc. Natl. Acad. Sci. U.S.A.">
        <title>Extensive mosaic structure revealed by the complete genome sequence of uropathogenic Escherichia coli.</title>
        <authorList>
            <person name="Welch R.A."/>
            <person name="Burland V."/>
            <person name="Plunkett G. III"/>
            <person name="Redford P."/>
            <person name="Roesch P."/>
            <person name="Rasko D."/>
            <person name="Buckles E.L."/>
            <person name="Liou S.-R."/>
            <person name="Boutin A."/>
            <person name="Hackett J."/>
            <person name="Stroud D."/>
            <person name="Mayhew G.F."/>
            <person name="Rose D.J."/>
            <person name="Zhou S."/>
            <person name="Schwartz D.C."/>
            <person name="Perna N.T."/>
            <person name="Mobley H.L.T."/>
            <person name="Donnenberg M.S."/>
            <person name="Blattner F.R."/>
        </authorList>
    </citation>
    <scope>NUCLEOTIDE SEQUENCE [LARGE SCALE GENOMIC DNA]</scope>
    <source>
        <strain>CFT073 / ATCC 700928 / UPEC</strain>
    </source>
</reference>
<proteinExistence type="inferred from homology"/>
<protein>
    <recommendedName>
        <fullName evidence="2">Histidine-binding periplasmic protein</fullName>
        <shortName>HBP</shortName>
    </recommendedName>
</protein>
<sequence>MKKLVLSLSLVLAFSSATAAFAAIPQNIRIGTDPTYAPFESKNSQGELVGFDIDLAKELCKRINTQCTFVENPLDALIPSLKAKKIDAIMSSLSITEKRQQEIAFTDKLYAADSRLVVAKNSDIQPTVESLKGKRVGVLQGTTQETFGNEHWAPKGIEIVSYQGQDNIYSDLTAGRIDAAFQDEVAASEGFLKQPVGKDYKFGGPSVKDEKLFGVGTGMGLRKEDNELREALNKAFAEMRADGTYEKLAKKYFDFDVYGG</sequence>
<evidence type="ECO:0000250" key="1">
    <source>
        <dbReference type="UniProtKB" id="P02910"/>
    </source>
</evidence>
<evidence type="ECO:0000250" key="2">
    <source>
        <dbReference type="UniProtKB" id="P0AEU0"/>
    </source>
</evidence>
<evidence type="ECO:0000305" key="3"/>
<accession>P0AEU1</accession>
<accession>P39182</accession>
<accession>P77763</accession>
<dbReference type="EMBL" id="AE014075">
    <property type="protein sequence ID" value="AAN81305.1"/>
    <property type="molecule type" value="Genomic_DNA"/>
</dbReference>
<dbReference type="RefSeq" id="WP_000737621.1">
    <property type="nucleotide sequence ID" value="NZ_CP051263.1"/>
</dbReference>
<dbReference type="BMRB" id="P0AEU1"/>
<dbReference type="SMR" id="P0AEU1"/>
<dbReference type="STRING" id="199310.c2851"/>
<dbReference type="GeneID" id="93774865"/>
<dbReference type="KEGG" id="ecc:c2851"/>
<dbReference type="eggNOG" id="COG0834">
    <property type="taxonomic scope" value="Bacteria"/>
</dbReference>
<dbReference type="HOGENOM" id="CLU_019602_18_0_6"/>
<dbReference type="BioCyc" id="ECOL199310:C2851-MONOMER"/>
<dbReference type="Proteomes" id="UP000001410">
    <property type="component" value="Chromosome"/>
</dbReference>
<dbReference type="GO" id="GO:0030288">
    <property type="term" value="C:outer membrane-bounded periplasmic space"/>
    <property type="evidence" value="ECO:0007669"/>
    <property type="project" value="InterPro"/>
</dbReference>
<dbReference type="GO" id="GO:0006865">
    <property type="term" value="P:amino acid transport"/>
    <property type="evidence" value="ECO:0007669"/>
    <property type="project" value="UniProtKB-KW"/>
</dbReference>
<dbReference type="CDD" id="cd13703">
    <property type="entry name" value="PBP2_HisJ_LAO"/>
    <property type="match status" value="1"/>
</dbReference>
<dbReference type="FunFam" id="3.40.190.10:FF:000020">
    <property type="entry name" value="Histidine ABC transporter substrate-binding periplasmic protein"/>
    <property type="match status" value="1"/>
</dbReference>
<dbReference type="Gene3D" id="3.40.190.10">
    <property type="entry name" value="Periplasmic binding protein-like II"/>
    <property type="match status" value="2"/>
</dbReference>
<dbReference type="InterPro" id="IPR005768">
    <property type="entry name" value="Lys_Arg_Orn-bd"/>
</dbReference>
<dbReference type="InterPro" id="IPR018313">
    <property type="entry name" value="SBP_3_CS"/>
</dbReference>
<dbReference type="InterPro" id="IPR001638">
    <property type="entry name" value="Solute-binding_3/MltF_N"/>
</dbReference>
<dbReference type="NCBIfam" id="TIGR01096">
    <property type="entry name" value="3A0103s03R"/>
    <property type="match status" value="1"/>
</dbReference>
<dbReference type="NCBIfam" id="NF011965">
    <property type="entry name" value="PRK15437.1"/>
    <property type="match status" value="1"/>
</dbReference>
<dbReference type="PANTHER" id="PTHR35936:SF13">
    <property type="entry name" value="HISTIDINE-BINDING PERIPLASMIC PROTEIN"/>
    <property type="match status" value="1"/>
</dbReference>
<dbReference type="PANTHER" id="PTHR35936">
    <property type="entry name" value="MEMBRANE-BOUND LYTIC MUREIN TRANSGLYCOSYLASE F"/>
    <property type="match status" value="1"/>
</dbReference>
<dbReference type="Pfam" id="PF00497">
    <property type="entry name" value="SBP_bac_3"/>
    <property type="match status" value="1"/>
</dbReference>
<dbReference type="SMART" id="SM00062">
    <property type="entry name" value="PBPb"/>
    <property type="match status" value="1"/>
</dbReference>
<dbReference type="SUPFAM" id="SSF53850">
    <property type="entry name" value="Periplasmic binding protein-like II"/>
    <property type="match status" value="1"/>
</dbReference>
<dbReference type="PROSITE" id="PS01039">
    <property type="entry name" value="SBP_BACTERIAL_3"/>
    <property type="match status" value="1"/>
</dbReference>
<comment type="function">
    <text evidence="1">Part of the ABC transporter complex HisPMQJ involved in histidine transport (By similarity). Binds histidine (By similarity). Interacts with HisQMP and stimulates ATPase activity of HisP, which results in histidine translocation (By similarity).</text>
</comment>
<comment type="subunit">
    <text evidence="1">The complex is composed of two ATP-binding proteins (HisP), two transmembrane proteins (HisM and HisQ) and a solute-binding protein (HisJ).</text>
</comment>
<comment type="subcellular location">
    <subcellularLocation>
        <location evidence="1">Periplasm</location>
    </subcellularLocation>
</comment>
<comment type="similarity">
    <text evidence="3">Belongs to the bacterial solute-binding protein 3 family.</text>
</comment>
<keyword id="KW-0029">Amino-acid transport</keyword>
<keyword id="KW-1015">Disulfide bond</keyword>
<keyword id="KW-0574">Periplasm</keyword>
<keyword id="KW-1185">Reference proteome</keyword>
<keyword id="KW-0732">Signal</keyword>
<keyword id="KW-0813">Transport</keyword>